<proteinExistence type="evidence at protein level"/>
<evidence type="ECO:0000250" key="1">
    <source>
        <dbReference type="UniProtKB" id="A0A1C9J6A7"/>
    </source>
</evidence>
<evidence type="ECO:0000250" key="2">
    <source>
        <dbReference type="UniProtKB" id="Q40577"/>
    </source>
</evidence>
<evidence type="ECO:0000269" key="3">
    <source>
    </source>
</evidence>
<evidence type="ECO:0000303" key="4">
    <source>
    </source>
</evidence>
<evidence type="ECO:0000305" key="5"/>
<evidence type="ECO:0000312" key="6">
    <source>
        <dbReference type="EMBL" id="KAF4359545.1"/>
    </source>
</evidence>
<gene>
    <name evidence="4" type="primary">TPS4FN</name>
    <name evidence="6" type="ORF">F8388_003548</name>
</gene>
<accession>A0A1V0QSG6</accession>
<accession>A0A7J6EMG9</accession>
<accession>A0A7J6EMH7</accession>
<comment type="function">
    <text evidence="3">Involved in sesquiterpene olefins biosynthesis, constituants of cannabinoids and terpenoids-rich resins (PubMed:28355238). Catalyzes mainly the conversion of (2E)-farnesyl diphosphate to allo-aromadendrene, and also produces minor products such as alpha-humulene, valencene and palustrol (PubMed:28355238). Can also use (2E)-geranyl diphosphate as substrate with low efficiency, producing minor amounts of myrcene (PubMed:28355238).</text>
</comment>
<comment type="catalytic activity">
    <reaction evidence="3">
        <text>(2E,6E)-farnesyl diphosphate = alpha-humulene + diphosphate</text>
        <dbReference type="Rhea" id="RHEA:31895"/>
        <dbReference type="ChEBI" id="CHEBI:5768"/>
        <dbReference type="ChEBI" id="CHEBI:33019"/>
        <dbReference type="ChEBI" id="CHEBI:175763"/>
        <dbReference type="EC" id="4.2.3.104"/>
    </reaction>
    <physiologicalReaction direction="left-to-right" evidence="3">
        <dbReference type="Rhea" id="RHEA:31896"/>
    </physiologicalReaction>
</comment>
<comment type="catalytic activity">
    <reaction evidence="3">
        <text>(2E,6E)-farnesyl diphosphate = (+)-valencene + diphosphate</text>
        <dbReference type="Rhea" id="RHEA:29511"/>
        <dbReference type="ChEBI" id="CHEBI:33019"/>
        <dbReference type="ChEBI" id="CHEBI:61700"/>
        <dbReference type="ChEBI" id="CHEBI:175763"/>
        <dbReference type="EC" id="4.2.3.73"/>
    </reaction>
    <physiologicalReaction direction="left-to-right" evidence="3">
        <dbReference type="Rhea" id="RHEA:29512"/>
    </physiologicalReaction>
</comment>
<comment type="catalytic activity">
    <reaction evidence="3">
        <text>(2E)-geranyl diphosphate = beta-myrcene + diphosphate</text>
        <dbReference type="Rhea" id="RHEA:16965"/>
        <dbReference type="ChEBI" id="CHEBI:17221"/>
        <dbReference type="ChEBI" id="CHEBI:33019"/>
        <dbReference type="ChEBI" id="CHEBI:58057"/>
        <dbReference type="EC" id="4.2.3.15"/>
    </reaction>
    <physiologicalReaction direction="left-to-right" evidence="3">
        <dbReference type="Rhea" id="RHEA:16966"/>
    </physiologicalReaction>
</comment>
<comment type="catalytic activity">
    <reaction evidence="3">
        <text>(2E,6E)-farnesyl diphosphate = allo-aromadendrene + diphosphate</text>
        <dbReference type="Rhea" id="RHEA:67400"/>
        <dbReference type="ChEBI" id="CHEBI:33019"/>
        <dbReference type="ChEBI" id="CHEBI:166670"/>
        <dbReference type="ChEBI" id="CHEBI:175763"/>
    </reaction>
    <physiologicalReaction direction="left-to-right" evidence="3">
        <dbReference type="Rhea" id="RHEA:67401"/>
    </physiologicalReaction>
</comment>
<comment type="catalytic activity">
    <reaction evidence="3">
        <text>(2E,6E)-farnesyl diphosphate + H2O = palustrol + diphosphate</text>
        <dbReference type="Rhea" id="RHEA:80399"/>
        <dbReference type="ChEBI" id="CHEBI:15377"/>
        <dbReference type="ChEBI" id="CHEBI:33019"/>
        <dbReference type="ChEBI" id="CHEBI:175763"/>
        <dbReference type="ChEBI" id="CHEBI:231493"/>
    </reaction>
    <physiologicalReaction direction="left-to-right" evidence="3">
        <dbReference type="Rhea" id="RHEA:80400"/>
    </physiologicalReaction>
</comment>
<comment type="cofactor">
    <cofactor evidence="1">
        <name>Mg(2+)</name>
        <dbReference type="ChEBI" id="CHEBI:18420"/>
    </cofactor>
    <cofactor evidence="1">
        <name>Mn(2+)</name>
        <dbReference type="ChEBI" id="CHEBI:29035"/>
    </cofactor>
    <text evidence="1">Binds 3 Mg(2+) or Mn(2+) ions per subunit.</text>
</comment>
<comment type="pathway">
    <text evidence="3">Secondary metabolite biosynthesis; terpenoid biosynthesis.</text>
</comment>
<comment type="domain">
    <text evidence="2">The Asp-Asp-Xaa-Xaa-Asp/Glu (DDXXD/E) motif is important for the catalytic activity, presumably through binding to Mg(2+).</text>
</comment>
<comment type="similarity">
    <text evidence="5">Belongs to the terpene synthase family. Tpsb subfamily.</text>
</comment>
<comment type="sequence caution" evidence="5">
    <conflict type="erroneous gene model prediction"/>
</comment>
<comment type="sequence caution" evidence="5">
    <conflict type="erroneous gene model prediction"/>
</comment>
<sequence>MSTQILATSFKNDNIHKIVRPTTNYHPSIWGDRFLHYDIPKEELNYKQGQVEELKEVVRKEIFGEFLCDDWSNRLKLIDVVQRLGLSYHFESEIQNELQHIYNKISINDSNFEHETLHDASIRFRLLRQHGYRVSLDIFDKFKDENGNFKECLASDTVGLLSLYEASHLSCVGENLLDEALSFTTKHLTEFLENNKKEHPNDDPLSKEISRALERPLRKTLVNLHARYFISIYEKDASHNKVLLQLAKLDFNLLQSMHKKELSEISRWWKELDSAHNFPFARNRIVELYIWILGVYYEPQYSFARNILVKIIALSSIADDIYDSYGIFEEHKLLIEAIDRWDKNCMDKLHPEYLQKYYKILLQSFEEFEQEFEKEETYKVYYGKETFKRLLRGYFEEARWLNEGYMPSLEEHLKVSLVTSGYFMLMACSLVGMKSNNIVTKQVFEWLSKDPKIVRASASVCRYMDDVAGHKNEQERNHIPSTIECYMKQYGVSEEEACDEMNRRVVIAWKEINEEFLKPTEAASPILVRALNLARVMDLLYKNGDNYTQVGKVTKDSVAVLLIDPIP</sequence>
<dbReference type="EC" id="4.2.3.-" evidence="3"/>
<dbReference type="EC" id="4.2.3.104" evidence="3"/>
<dbReference type="EC" id="4.2.3.15" evidence="3"/>
<dbReference type="EC" id="4.2.3.73" evidence="3"/>
<dbReference type="EMBL" id="KY014564">
    <property type="protein sequence ID" value="ARE72260.2"/>
    <property type="molecule type" value="mRNA"/>
</dbReference>
<dbReference type="EMBL" id="JAATIP010000214">
    <property type="protein sequence ID" value="KAF4359545.1"/>
    <property type="status" value="ALT_SEQ"/>
    <property type="molecule type" value="Genomic_DNA"/>
</dbReference>
<dbReference type="EMBL" id="JAATIP010000214">
    <property type="protein sequence ID" value="KAF4359546.1"/>
    <property type="status" value="ALT_SEQ"/>
    <property type="molecule type" value="Genomic_DNA"/>
</dbReference>
<dbReference type="SMR" id="A0A1V0QSG6"/>
<dbReference type="UniPathway" id="UPA00213"/>
<dbReference type="Proteomes" id="UP000525078">
    <property type="component" value="Unassembled WGS sequence"/>
</dbReference>
<dbReference type="Proteomes" id="UP000596661">
    <property type="component" value="Unplaced"/>
</dbReference>
<dbReference type="GO" id="GO:0000287">
    <property type="term" value="F:magnesium ion binding"/>
    <property type="evidence" value="ECO:0007669"/>
    <property type="project" value="InterPro"/>
</dbReference>
<dbReference type="GO" id="GO:0010333">
    <property type="term" value="F:terpene synthase activity"/>
    <property type="evidence" value="ECO:0007669"/>
    <property type="project" value="InterPro"/>
</dbReference>
<dbReference type="GO" id="GO:0016102">
    <property type="term" value="P:diterpenoid biosynthetic process"/>
    <property type="evidence" value="ECO:0007669"/>
    <property type="project" value="InterPro"/>
</dbReference>
<dbReference type="CDD" id="cd00684">
    <property type="entry name" value="Terpene_cyclase_plant_C1"/>
    <property type="match status" value="1"/>
</dbReference>
<dbReference type="FunFam" id="1.10.600.10:FF:000007">
    <property type="entry name" value="Isoprene synthase, chloroplastic"/>
    <property type="match status" value="1"/>
</dbReference>
<dbReference type="FunFam" id="1.50.10.130:FF:000001">
    <property type="entry name" value="Isoprene synthase, chloroplastic"/>
    <property type="match status" value="1"/>
</dbReference>
<dbReference type="Gene3D" id="1.10.600.10">
    <property type="entry name" value="Farnesyl Diphosphate Synthase"/>
    <property type="match status" value="1"/>
</dbReference>
<dbReference type="Gene3D" id="1.50.10.130">
    <property type="entry name" value="Terpene synthase, N-terminal domain"/>
    <property type="match status" value="1"/>
</dbReference>
<dbReference type="InterPro" id="IPR008949">
    <property type="entry name" value="Isoprenoid_synthase_dom_sf"/>
</dbReference>
<dbReference type="InterPro" id="IPR034741">
    <property type="entry name" value="Terpene_cyclase-like_1_C"/>
</dbReference>
<dbReference type="InterPro" id="IPR044814">
    <property type="entry name" value="Terpene_cyclase_plant_C1"/>
</dbReference>
<dbReference type="InterPro" id="IPR001906">
    <property type="entry name" value="Terpene_synth_N"/>
</dbReference>
<dbReference type="InterPro" id="IPR036965">
    <property type="entry name" value="Terpene_synth_N_sf"/>
</dbReference>
<dbReference type="InterPro" id="IPR050148">
    <property type="entry name" value="Terpene_synthase-like"/>
</dbReference>
<dbReference type="InterPro" id="IPR005630">
    <property type="entry name" value="Terpene_synthase_metal-bd"/>
</dbReference>
<dbReference type="InterPro" id="IPR008930">
    <property type="entry name" value="Terpenoid_cyclase/PrenylTrfase"/>
</dbReference>
<dbReference type="PANTHER" id="PTHR31225:SF221">
    <property type="entry name" value="(-)-GERMACRENE D SYNTHASE"/>
    <property type="match status" value="1"/>
</dbReference>
<dbReference type="PANTHER" id="PTHR31225">
    <property type="entry name" value="OS04G0344100 PROTEIN-RELATED"/>
    <property type="match status" value="1"/>
</dbReference>
<dbReference type="Pfam" id="PF01397">
    <property type="entry name" value="Terpene_synth"/>
    <property type="match status" value="1"/>
</dbReference>
<dbReference type="Pfam" id="PF03936">
    <property type="entry name" value="Terpene_synth_C"/>
    <property type="match status" value="1"/>
</dbReference>
<dbReference type="SFLD" id="SFLDS00005">
    <property type="entry name" value="Isoprenoid_Synthase_Type_I"/>
    <property type="match status" value="1"/>
</dbReference>
<dbReference type="SFLD" id="SFLDG01019">
    <property type="entry name" value="Terpene_Cyclase_Like_1_C_Termi"/>
    <property type="match status" value="1"/>
</dbReference>
<dbReference type="SUPFAM" id="SSF48239">
    <property type="entry name" value="Terpenoid cyclases/Protein prenyltransferases"/>
    <property type="match status" value="1"/>
</dbReference>
<dbReference type="SUPFAM" id="SSF48576">
    <property type="entry name" value="Terpenoid synthases"/>
    <property type="match status" value="1"/>
</dbReference>
<name>TS4FN_CANSA</name>
<feature type="chain" id="PRO_0000460898" description="Allo-aromadendrene synthase TPS4FN">
    <location>
        <begin position="1"/>
        <end position="567"/>
    </location>
</feature>
<feature type="short sequence motif" description="DDXXD motif" evidence="2">
    <location>
        <begin position="319"/>
        <end position="323"/>
    </location>
</feature>
<feature type="binding site" evidence="2">
    <location>
        <position position="282"/>
    </location>
    <ligand>
        <name>(2E,6E)-farnesyl diphosphate</name>
        <dbReference type="ChEBI" id="CHEBI:175763"/>
    </ligand>
</feature>
<feature type="binding site" evidence="2">
    <location>
        <position position="319"/>
    </location>
    <ligand>
        <name>(2E,6E)-farnesyl diphosphate</name>
        <dbReference type="ChEBI" id="CHEBI:175763"/>
    </ligand>
</feature>
<feature type="binding site" evidence="2">
    <location>
        <position position="319"/>
    </location>
    <ligand>
        <name>Mg(2+)</name>
        <dbReference type="ChEBI" id="CHEBI:18420"/>
        <label>1</label>
    </ligand>
</feature>
<feature type="binding site" evidence="2">
    <location>
        <position position="319"/>
    </location>
    <ligand>
        <name>Mg(2+)</name>
        <dbReference type="ChEBI" id="CHEBI:18420"/>
        <label>2</label>
    </ligand>
</feature>
<feature type="binding site" evidence="2">
    <location>
        <position position="323"/>
    </location>
    <ligand>
        <name>(2E,6E)-farnesyl diphosphate</name>
        <dbReference type="ChEBI" id="CHEBI:175763"/>
    </ligand>
</feature>
<feature type="binding site" evidence="2">
    <location>
        <position position="323"/>
    </location>
    <ligand>
        <name>Mg(2+)</name>
        <dbReference type="ChEBI" id="CHEBI:18420"/>
        <label>1</label>
    </ligand>
</feature>
<feature type="binding site" evidence="2">
    <location>
        <position position="323"/>
    </location>
    <ligand>
        <name>Mg(2+)</name>
        <dbReference type="ChEBI" id="CHEBI:18420"/>
        <label>2</label>
    </ligand>
</feature>
<feature type="binding site" evidence="2">
    <location>
        <position position="462"/>
    </location>
    <ligand>
        <name>(2E,6E)-farnesyl diphosphate</name>
        <dbReference type="ChEBI" id="CHEBI:175763"/>
    </ligand>
</feature>
<feature type="binding site" evidence="2">
    <location>
        <position position="465"/>
    </location>
    <ligand>
        <name>(2E,6E)-farnesyl diphosphate</name>
        <dbReference type="ChEBI" id="CHEBI:175763"/>
    </ligand>
</feature>
<feature type="binding site" evidence="2">
    <location>
        <position position="465"/>
    </location>
    <ligand>
        <name>Mg(2+)</name>
        <dbReference type="ChEBI" id="CHEBI:18420"/>
        <label>3</label>
    </ligand>
</feature>
<feature type="binding site" evidence="2">
    <location>
        <position position="473"/>
    </location>
    <ligand>
        <name>Mg(2+)</name>
        <dbReference type="ChEBI" id="CHEBI:18420"/>
        <label>3</label>
    </ligand>
</feature>
<feature type="sequence conflict" description="In Ref. 1; ARE72260." evidence="5" ref="1">
    <original>S</original>
    <variation>N</variation>
    <location>
        <position position="72"/>
    </location>
</feature>
<feature type="sequence conflict" description="In Ref. 1; ARE72260." evidence="5" ref="1">
    <original>Q</original>
    <variation>E</variation>
    <location>
        <position position="82"/>
    </location>
</feature>
<feature type="sequence conflict" description="In Ref. 1; ARE72260." evidence="5" ref="1">
    <original>E</original>
    <variation>K</variation>
    <location>
        <position position="113"/>
    </location>
</feature>
<feature type="sequence conflict" description="In Ref. 1; ARE72260." evidence="5" ref="1">
    <original>R</original>
    <variation>K</variation>
    <location>
        <position position="392"/>
    </location>
</feature>
<protein>
    <recommendedName>
        <fullName evidence="4">Allo-aromadendrene synthase TPS4FN</fullName>
        <ecNumber evidence="3">4.2.3.-</ecNumber>
    </recommendedName>
    <alternativeName>
        <fullName evidence="4">Alpha-humulene synthase TPS4FN</fullName>
        <ecNumber evidence="3">4.2.3.104</ecNumber>
    </alternativeName>
    <alternativeName>
        <fullName evidence="4">Myrcene synthase TPS4FN</fullName>
        <ecNumber evidence="3">4.2.3.15</ecNumber>
    </alternativeName>
    <alternativeName>
        <fullName evidence="4">Palustrol synthase TPS4FN</fullName>
        <ecNumber evidence="3">4.2.3.-</ecNumber>
    </alternativeName>
    <alternativeName>
        <fullName evidence="4">Terpene synthase 4FN</fullName>
        <shortName evidence="4">CsTPS4FN</shortName>
    </alternativeName>
    <alternativeName>
        <fullName evidence="4">Valencene synthase TPS4FN</fullName>
        <ecNumber evidence="3">4.2.3.73</ecNumber>
    </alternativeName>
</protein>
<reference key="1">
    <citation type="journal article" date="2017" name="PLoS ONE">
        <title>Terpene synthases from Cannabis sativa.</title>
        <authorList>
            <person name="Booth J.K."/>
            <person name="Page J.E."/>
            <person name="Bohlmann J."/>
        </authorList>
    </citation>
    <scope>NUCLEOTIDE SEQUENCE [MRNA]</scope>
    <scope>FUNCTION</scope>
    <scope>CATALYTIC ACTIVITY</scope>
    <scope>PATHWAY</scope>
    <source>
        <strain>cv. Finola</strain>
    </source>
</reference>
<reference key="2">
    <citation type="submission" date="2020-03" db="EMBL/GenBank/DDBJ databases">
        <title>Sequence and annotation of 42 cannabis genomes reveals extensive copy number variation in cannabinoid synthesis and pathogen resistance genes.</title>
        <authorList>
            <person name="Mckernan K.J."/>
            <person name="Helbert Y."/>
            <person name="Kane L.T."/>
            <person name="Ebling H."/>
            <person name="Zhang L."/>
            <person name="Liu B."/>
            <person name="Eaton Z."/>
            <person name="Mclaughlin S."/>
            <person name="Kingan S."/>
            <person name="Baybayan P."/>
            <person name="Concepcion G."/>
            <person name="Jordan M."/>
            <person name="Riva A."/>
            <person name="Barbazuk W."/>
            <person name="Harkins T."/>
        </authorList>
    </citation>
    <scope>NUCLEOTIDE SEQUENCE [LARGE SCALE GENOMIC DNA]</scope>
    <source>
        <strain>cv. Jamaican Lion 4</strain>
        <tissue>Leaf</tissue>
    </source>
</reference>
<keyword id="KW-0456">Lyase</keyword>
<keyword id="KW-0460">Magnesium</keyword>
<keyword id="KW-0479">Metal-binding</keyword>
<organism>
    <name type="scientific">Cannabis sativa</name>
    <name type="common">Hemp</name>
    <name type="synonym">Marijuana</name>
    <dbReference type="NCBI Taxonomy" id="3483"/>
    <lineage>
        <taxon>Eukaryota</taxon>
        <taxon>Viridiplantae</taxon>
        <taxon>Streptophyta</taxon>
        <taxon>Embryophyta</taxon>
        <taxon>Tracheophyta</taxon>
        <taxon>Spermatophyta</taxon>
        <taxon>Magnoliopsida</taxon>
        <taxon>eudicotyledons</taxon>
        <taxon>Gunneridae</taxon>
        <taxon>Pentapetalae</taxon>
        <taxon>rosids</taxon>
        <taxon>fabids</taxon>
        <taxon>Rosales</taxon>
        <taxon>Cannabaceae</taxon>
        <taxon>Cannabis</taxon>
    </lineage>
</organism>